<proteinExistence type="evidence at transcript level"/>
<accession>Q5XHF8</accession>
<organism>
    <name type="scientific">Xenopus laevis</name>
    <name type="common">African clawed frog</name>
    <dbReference type="NCBI Taxonomy" id="8355"/>
    <lineage>
        <taxon>Eukaryota</taxon>
        <taxon>Metazoa</taxon>
        <taxon>Chordata</taxon>
        <taxon>Craniata</taxon>
        <taxon>Vertebrata</taxon>
        <taxon>Euteleostomi</taxon>
        <taxon>Amphibia</taxon>
        <taxon>Batrachia</taxon>
        <taxon>Anura</taxon>
        <taxon>Pipoidea</taxon>
        <taxon>Pipidae</taxon>
        <taxon>Xenopodinae</taxon>
        <taxon>Xenopus</taxon>
        <taxon>Xenopus</taxon>
    </lineage>
</organism>
<evidence type="ECO:0000250" key="1"/>
<evidence type="ECO:0000250" key="2">
    <source>
        <dbReference type="UniProtKB" id="O43314"/>
    </source>
</evidence>
<evidence type="ECO:0000256" key="3">
    <source>
        <dbReference type="SAM" id="MobiDB-lite"/>
    </source>
</evidence>
<evidence type="ECO:0000305" key="4"/>
<comment type="function">
    <text evidence="2">Bifunctional inositol kinase that acts in concert with the IP6K kinases IP6K1, IP6K2 and IP6K3 to synthesize the diphosphate group-containing inositol pyrophosphates diphosphoinositol pentakisphosphate, PP-InsP5, and bis-diphosphoinositol tetrakisphosphate, (PP)2-InsP4. PP-InsP5 and (PP)2-InsP4, also respectively called InsP7 and InsP8, regulate a variety of cellular processes, including apoptosis, vesicle trafficking, cytoskeletal dynamics, exocytosis, insulin signaling and neutrophil activation. Phosphorylates inositol hexakisphosphate (InsP6) at position 1 to produce PP-InsP5 which is in turn phosphorylated by IP6Ks to produce (PP)2-InsP4. Alternatively, phosphorylates PP-InsP5 at position 1, produced by IP6Ks from InsP6, to produce (PP)2-InsP4.</text>
</comment>
<comment type="catalytic activity">
    <reaction evidence="2">
        <text>1D-myo-inositol hexakisphosphate + ATP = 1-diphospho-1D-myo-inositol 2,3,4,5,6-pentakisphosphate + ADP</text>
        <dbReference type="Rhea" id="RHEA:37459"/>
        <dbReference type="ChEBI" id="CHEBI:30616"/>
        <dbReference type="ChEBI" id="CHEBI:58130"/>
        <dbReference type="ChEBI" id="CHEBI:74946"/>
        <dbReference type="ChEBI" id="CHEBI:456216"/>
        <dbReference type="EC" id="2.7.4.24"/>
    </reaction>
    <physiologicalReaction direction="left-to-right" evidence="2">
        <dbReference type="Rhea" id="RHEA:37460"/>
    </physiologicalReaction>
</comment>
<comment type="catalytic activity">
    <reaction evidence="2">
        <text>5-diphospho-1D-myo-inositol 1,2,3,4,6-pentakisphosphate + ATP + H(+) = 1,5-bis(diphospho)-1D-myo-inositol 2,3,4,6-tetrakisphosphate + ADP</text>
        <dbReference type="Rhea" id="RHEA:10276"/>
        <dbReference type="ChEBI" id="CHEBI:15378"/>
        <dbReference type="ChEBI" id="CHEBI:30616"/>
        <dbReference type="ChEBI" id="CHEBI:58628"/>
        <dbReference type="ChEBI" id="CHEBI:77983"/>
        <dbReference type="ChEBI" id="CHEBI:456216"/>
        <dbReference type="EC" id="2.7.4.24"/>
    </reaction>
    <physiologicalReaction direction="left-to-right" evidence="2">
        <dbReference type="Rhea" id="RHEA:10277"/>
    </physiologicalReaction>
</comment>
<comment type="subcellular location">
    <subcellularLocation>
        <location evidence="2">Cytoplasm</location>
        <location evidence="2">Cytosol</location>
    </subcellularLocation>
</comment>
<comment type="domain">
    <text evidence="2">The C-terminal acid phosphatase-like domain binds PtdIns(3,4,5)P3 and InsP6. Despite its similarity with the phosphatase domain of histidine acid phosphatases, it has no phosphatase activity.</text>
</comment>
<comment type="similarity">
    <text evidence="4">Belongs to the histidine acid phosphatase family. VIP1 subfamily.</text>
</comment>
<dbReference type="EC" id="2.7.4.24" evidence="2"/>
<dbReference type="EMBL" id="BC084099">
    <property type="protein sequence ID" value="AAH84099.1"/>
    <property type="molecule type" value="mRNA"/>
</dbReference>
<dbReference type="RefSeq" id="NP_001088187.1">
    <property type="nucleotide sequence ID" value="NM_001094718.1"/>
</dbReference>
<dbReference type="SMR" id="Q5XHF8"/>
<dbReference type="DNASU" id="495012"/>
<dbReference type="AGR" id="Xenbase:XB-GENE-1000382"/>
<dbReference type="Xenbase" id="XB-GENE-1000382">
    <property type="gene designation" value="ppip5k2.L"/>
</dbReference>
<dbReference type="Proteomes" id="UP000186698">
    <property type="component" value="Unplaced"/>
</dbReference>
<dbReference type="Bgee" id="495012">
    <property type="expression patterns" value="Expressed in egg cell and 19 other cell types or tissues"/>
</dbReference>
<dbReference type="GO" id="GO:0005829">
    <property type="term" value="C:cytosol"/>
    <property type="evidence" value="ECO:0000250"/>
    <property type="project" value="UniProtKB"/>
</dbReference>
<dbReference type="GO" id="GO:0033857">
    <property type="term" value="F:5-diphosphoinositol pentakisphosphate 1-kinase activity"/>
    <property type="evidence" value="ECO:0000250"/>
    <property type="project" value="UniProtKB"/>
</dbReference>
<dbReference type="GO" id="GO:0005524">
    <property type="term" value="F:ATP binding"/>
    <property type="evidence" value="ECO:0000250"/>
    <property type="project" value="UniProtKB"/>
</dbReference>
<dbReference type="GO" id="GO:0052723">
    <property type="term" value="F:inositol hexakisphosphate 1-kinase activity"/>
    <property type="evidence" value="ECO:0007669"/>
    <property type="project" value="RHEA"/>
</dbReference>
<dbReference type="GO" id="GO:0000832">
    <property type="term" value="F:inositol hexakisphosphate 5-kinase activity"/>
    <property type="evidence" value="ECO:0000250"/>
    <property type="project" value="UniProtKB"/>
</dbReference>
<dbReference type="GO" id="GO:0000828">
    <property type="term" value="F:inositol hexakisphosphate kinase activity"/>
    <property type="evidence" value="ECO:0000318"/>
    <property type="project" value="GO_Central"/>
</dbReference>
<dbReference type="GO" id="GO:0000827">
    <property type="term" value="F:inositol-1,3,4,5,6-pentakisphosphate kinase activity"/>
    <property type="evidence" value="ECO:0000250"/>
    <property type="project" value="UniProtKB"/>
</dbReference>
<dbReference type="GO" id="GO:0006020">
    <property type="term" value="P:inositol metabolic process"/>
    <property type="evidence" value="ECO:0000250"/>
    <property type="project" value="UniProtKB"/>
</dbReference>
<dbReference type="GO" id="GO:0032958">
    <property type="term" value="P:inositol phosphate biosynthetic process"/>
    <property type="evidence" value="ECO:0000318"/>
    <property type="project" value="GO_Central"/>
</dbReference>
<dbReference type="CDD" id="cd07061">
    <property type="entry name" value="HP_HAP_like"/>
    <property type="match status" value="1"/>
</dbReference>
<dbReference type="FunFam" id="3.30.470.20:FF:000003">
    <property type="entry name" value="Inositol hexakisphosphate and diphosphoinositol-pentakisphosphate kinase"/>
    <property type="match status" value="1"/>
</dbReference>
<dbReference type="FunFam" id="3.40.50.11950:FF:000002">
    <property type="entry name" value="Inositol hexakisphosphate and diphosphoinositol-pentakisphosphate kinase"/>
    <property type="match status" value="1"/>
</dbReference>
<dbReference type="FunFam" id="3.40.50.11950:FF:000003">
    <property type="entry name" value="Inositol hexakisphosphate and diphosphoinositol-pentakisphosphate kinase"/>
    <property type="match status" value="1"/>
</dbReference>
<dbReference type="FunFam" id="3.40.50.1240:FF:000013">
    <property type="entry name" value="Inositol hexakisphosphate and diphosphoinositol-pentakisphosphate kinase"/>
    <property type="match status" value="1"/>
</dbReference>
<dbReference type="Gene3D" id="3.40.50.11950">
    <property type="match status" value="1"/>
</dbReference>
<dbReference type="Gene3D" id="3.30.470.20">
    <property type="entry name" value="ATP-grasp fold, B domain"/>
    <property type="match status" value="1"/>
</dbReference>
<dbReference type="Gene3D" id="3.40.50.1240">
    <property type="entry name" value="Phosphoglycerate mutase-like"/>
    <property type="match status" value="1"/>
</dbReference>
<dbReference type="InterPro" id="IPR033379">
    <property type="entry name" value="Acid_Pase_AS"/>
</dbReference>
<dbReference type="InterPro" id="IPR000560">
    <property type="entry name" value="His_Pase_clade-2"/>
</dbReference>
<dbReference type="InterPro" id="IPR037446">
    <property type="entry name" value="His_Pase_VIP1"/>
</dbReference>
<dbReference type="InterPro" id="IPR029033">
    <property type="entry name" value="His_PPase_superfam"/>
</dbReference>
<dbReference type="InterPro" id="IPR040557">
    <property type="entry name" value="VIP1_N"/>
</dbReference>
<dbReference type="PANTHER" id="PTHR12750">
    <property type="entry name" value="DIPHOSPHOINOSITOL PENTAKISPHOSPHATE KINASE"/>
    <property type="match status" value="1"/>
</dbReference>
<dbReference type="PANTHER" id="PTHR12750:SF10">
    <property type="entry name" value="INOSITOL HEXAKISPHOSPHATE AND DIPHOSPHOINOSITOL-PENTAKISPHOSPHATE KINASE 2"/>
    <property type="match status" value="1"/>
</dbReference>
<dbReference type="Pfam" id="PF00328">
    <property type="entry name" value="His_Phos_2"/>
    <property type="match status" value="1"/>
</dbReference>
<dbReference type="Pfam" id="PF18086">
    <property type="entry name" value="PPIP5K2_N"/>
    <property type="match status" value="1"/>
</dbReference>
<dbReference type="SUPFAM" id="SSF56059">
    <property type="entry name" value="Glutathione synthetase ATP-binding domain-like"/>
    <property type="match status" value="1"/>
</dbReference>
<dbReference type="SUPFAM" id="SSF53254">
    <property type="entry name" value="Phosphoglycerate mutase-like"/>
    <property type="match status" value="1"/>
</dbReference>
<dbReference type="PROSITE" id="PS00616">
    <property type="entry name" value="HIS_ACID_PHOSPHAT_1"/>
    <property type="match status" value="1"/>
</dbReference>
<name>VIP2_XENLA</name>
<feature type="chain" id="PRO_0000315695" description="Inositol hexakisphosphate and diphosphoinositol-pentakisphosphate kinase 2">
    <location>
        <begin position="1"/>
        <end position="1131"/>
    </location>
</feature>
<feature type="region of interest" description="Disordered" evidence="3">
    <location>
        <begin position="21"/>
        <end position="53"/>
    </location>
</feature>
<feature type="region of interest" description="Polyphosphoinositide-binding domain" evidence="2">
    <location>
        <begin position="385"/>
        <end position="456"/>
    </location>
</feature>
<feature type="region of interest" description="Disordered" evidence="3">
    <location>
        <begin position="912"/>
        <end position="951"/>
    </location>
</feature>
<feature type="compositionally biased region" description="Basic and acidic residues" evidence="3">
    <location>
        <begin position="25"/>
        <end position="38"/>
    </location>
</feature>
<feature type="compositionally biased region" description="Acidic residues" evidence="3">
    <location>
        <begin position="39"/>
        <end position="52"/>
    </location>
</feature>
<feature type="compositionally biased region" description="Basic and acidic residues" evidence="3">
    <location>
        <begin position="934"/>
        <end position="951"/>
    </location>
</feature>
<feature type="binding site" evidence="2">
    <location>
        <begin position="67"/>
        <end position="68"/>
    </location>
    <ligand>
        <name>substrate</name>
    </ligand>
</feature>
<feature type="binding site" evidence="2">
    <location>
        <position position="148"/>
    </location>
    <ligand>
        <name>ATP</name>
        <dbReference type="ChEBI" id="CHEBI:30616"/>
    </ligand>
</feature>
<feature type="binding site" evidence="2">
    <location>
        <position position="201"/>
    </location>
    <ligand>
        <name>ATP</name>
        <dbReference type="ChEBI" id="CHEBI:30616"/>
    </ligand>
</feature>
<feature type="binding site" evidence="2">
    <location>
        <position position="208"/>
    </location>
    <ligand>
        <name>ATP</name>
        <dbReference type="ChEBI" id="CHEBI:30616"/>
    </ligand>
</feature>
<feature type="binding site" evidence="2">
    <location>
        <begin position="227"/>
        <end position="228"/>
    </location>
    <ligand>
        <name>substrate</name>
    </ligand>
</feature>
<feature type="binding site" evidence="2">
    <location>
        <position position="227"/>
    </location>
    <ligand>
        <name>ATP</name>
        <dbReference type="ChEBI" id="CHEBI:30616"/>
    </ligand>
</feature>
<feature type="binding site" evidence="2">
    <location>
        <begin position="251"/>
        <end position="254"/>
    </location>
    <ligand>
        <name>ATP</name>
        <dbReference type="ChEBI" id="CHEBI:30616"/>
    </ligand>
</feature>
<feature type="binding site" evidence="2">
    <location>
        <begin position="260"/>
        <end position="262"/>
    </location>
    <ligand>
        <name>ATP</name>
        <dbReference type="ChEBI" id="CHEBI:30616"/>
    </ligand>
</feature>
<feature type="binding site" evidence="2">
    <location>
        <position position="262"/>
    </location>
    <ligand>
        <name>substrate</name>
    </ligand>
</feature>
<feature type="binding site" evidence="2">
    <location>
        <position position="276"/>
    </location>
    <ligand>
        <name>substrate</name>
    </ligand>
</feature>
<feature type="binding site" evidence="1">
    <location>
        <position position="278"/>
    </location>
    <ligand>
        <name>ATP</name>
        <dbReference type="ChEBI" id="CHEBI:30616"/>
    </ligand>
</feature>
<feature type="binding site" evidence="1">
    <location>
        <position position="323"/>
    </location>
    <ligand>
        <name>ATP</name>
        <dbReference type="ChEBI" id="CHEBI:30616"/>
    </ligand>
</feature>
<feature type="binding site" evidence="2">
    <location>
        <begin position="335"/>
        <end position="337"/>
    </location>
    <ligand>
        <name>ATP</name>
        <dbReference type="ChEBI" id="CHEBI:30616"/>
    </ligand>
</feature>
<feature type="binding site" evidence="2">
    <location>
        <begin position="340"/>
        <end position="343"/>
    </location>
    <ligand>
        <name>substrate</name>
    </ligand>
</feature>
<protein>
    <recommendedName>
        <fullName evidence="2">Inositol hexakisphosphate and diphosphoinositol-pentakisphosphate kinase 2</fullName>
        <ecNumber evidence="2">2.7.4.24</ecNumber>
    </recommendedName>
    <alternativeName>
        <fullName>Diphosphoinositol pentakisphosphate kinase 2</fullName>
    </alternativeName>
    <alternativeName>
        <fullName>Histidine acid phosphatase domain-containing protein 1</fullName>
    </alternativeName>
    <alternativeName>
        <fullName>InsP6 and PP-IP5 kinase 2</fullName>
    </alternativeName>
    <alternativeName>
        <fullName>VIP1 homolog 2</fullName>
    </alternativeName>
</protein>
<reference key="1">
    <citation type="submission" date="2004-10" db="EMBL/GenBank/DDBJ databases">
        <authorList>
            <consortium name="NIH - Xenopus Gene Collection (XGC) project"/>
        </authorList>
    </citation>
    <scope>NUCLEOTIDE SEQUENCE [LARGE SCALE MRNA]</scope>
    <source>
        <tissue>Oocyte</tissue>
    </source>
</reference>
<sequence length="1131" mass="128720">MSVSATENDVPRFFVGCEESDELLDQSKPENLDNLYEHTEDEEDEEDDEYDSPPERQIVVGICAMAKKSKSKPMKEILERLSLFKYITVVIFEEEVILNETVENWPLCDCLISFHSKGFLLDKAVAYAKLRNPFVINDLNLQYQIQDRREVYRILTNEGIMLPRYAVLNRDPNKPEECNLIEGEDHVEVNGEIFQKPFVEKPVSAEDHNVYIYYPTSAGGGSQRLFRKIGSRSSVYSPESSVRKTGSYIYEEFMPTDGTDVKVYTVGPDYAHAEARKSPALDGKVERDSEGKEVRYPVILNAREKLIAWKVCLAFKQTVCGFDLLRASGQSYVCDVNGFSFVKNSMKYYDDCAKILGNIIMRELAPVFHIPWSIPLEAEDIPIVPTTSGTKMELRCVIAVIRHGDRTPKQKMKMEVRHQRFFDLFEKYHGYKTGKIKLKKPKQLQEVLDIARQLLVELGQNNDSEIEESKAKLEQLKTVLEMYGHFSGINRKVQLTYLPHGCPKTSSEEEDCRREEPSLLLVLKWGGELTPAGRVQAEELGRAFRCMYPGGQGDYAGFPGCGLLRLHSTYRHDLKIYASDEGRVQMTAAAFAKGLLALEGELTPILVQMVKSANMNGLLDSDSDSLSSCQHRVKARLHEILQRDRDFSSEDFEKLSPTGSVSQIKSMHFIKNPVKTCDKVYSLIQSLTSQIRQRMEDPKFADIQLYHSETLELMLRRWSKLEKDFKTKNGRYDISKIPDIYDCIKYDVQHNCSLKLENTMELYRLSKALADIVIPQEYGISRPEKLEIAKGYCTPLVRKIRSDLQRTQDDDTVNKLHPLYSRGVMSPERHVRTRLYFTSESHVHSLLSILRFGALCDETKDEQWKRAMDYLNVVSELNYMTQIVIMLYEDPNKDVSSEERFHVELHFSPGAKGCEEDKNLPSGFGYRPASQENESSKKHTHANDSDEDLGVCRRDEPDRALVMFKPMVSDPIHIHRKSPLPRSRKIGSVEVLSDNNSHLRTARLLEQKHIGLGFELYSMVPSICPLETLHNSLSLKQVDEFLSAVAAPSSDYQMDTPTASPSTPGFYTYVGGRKISLNTYTPTKILPPLFPVSTDVEMSDSVFQSCSSTSMVPGLAGSADNTERNHQAQDD</sequence>
<gene>
    <name evidence="2" type="primary">ppip5k2</name>
    <name type="synonym">hisppd1</name>
    <name type="synonym">vip2</name>
</gene>
<keyword id="KW-0067">ATP-binding</keyword>
<keyword id="KW-0963">Cytoplasm</keyword>
<keyword id="KW-0418">Kinase</keyword>
<keyword id="KW-0547">Nucleotide-binding</keyword>
<keyword id="KW-1185">Reference proteome</keyword>
<keyword id="KW-0808">Transferase</keyword>